<proteinExistence type="inferred from homology"/>
<protein>
    <recommendedName>
        <fullName evidence="1">Small ribosomal subunit protein uS15</fullName>
    </recommendedName>
    <alternativeName>
        <fullName evidence="2">30S ribosomal protein S15</fullName>
    </alternativeName>
</protein>
<reference key="1">
    <citation type="submission" date="2005-03" db="EMBL/GenBank/DDBJ databases">
        <title>Brevibacillus brevis strain 47, complete genome.</title>
        <authorList>
            <person name="Hosoyama A."/>
            <person name="Yamada R."/>
            <person name="Hongo Y."/>
            <person name="Terui Y."/>
            <person name="Ankai A."/>
            <person name="Masuyama W."/>
            <person name="Sekiguchi M."/>
            <person name="Takeda T."/>
            <person name="Asano K."/>
            <person name="Ohji S."/>
            <person name="Ichikawa N."/>
            <person name="Narita S."/>
            <person name="Aoki N."/>
            <person name="Miura H."/>
            <person name="Matsushita S."/>
            <person name="Sekigawa T."/>
            <person name="Yamagata H."/>
            <person name="Yoshikawa H."/>
            <person name="Udaka S."/>
            <person name="Tanikawa S."/>
            <person name="Fujita N."/>
        </authorList>
    </citation>
    <scope>NUCLEOTIDE SEQUENCE [LARGE SCALE GENOMIC DNA]</scope>
    <source>
        <strain>47 / JCM 6285 / NBRC 100599</strain>
    </source>
</reference>
<keyword id="KW-1185">Reference proteome</keyword>
<keyword id="KW-0687">Ribonucleoprotein</keyword>
<keyword id="KW-0689">Ribosomal protein</keyword>
<keyword id="KW-0694">RNA-binding</keyword>
<keyword id="KW-0699">rRNA-binding</keyword>
<evidence type="ECO:0000255" key="1">
    <source>
        <dbReference type="HAMAP-Rule" id="MF_01343"/>
    </source>
</evidence>
<evidence type="ECO:0000305" key="2"/>
<comment type="function">
    <text evidence="1">One of the primary rRNA binding proteins, it binds directly to 16S rRNA where it helps nucleate assembly of the platform of the 30S subunit by binding and bridging several RNA helices of the 16S rRNA.</text>
</comment>
<comment type="function">
    <text evidence="1">Forms an intersubunit bridge (bridge B4) with the 23S rRNA of the 50S subunit in the ribosome.</text>
</comment>
<comment type="subunit">
    <text evidence="1">Part of the 30S ribosomal subunit. Forms a bridge to the 50S subunit in the 70S ribosome, contacting the 23S rRNA.</text>
</comment>
<comment type="similarity">
    <text evidence="1">Belongs to the universal ribosomal protein uS15 family.</text>
</comment>
<gene>
    <name evidence="1" type="primary">rpsO</name>
    <name type="ordered locus">BBR47_34270</name>
</gene>
<sequence length="89" mass="10542">MALTQERKTQLIQEFRTHENDTGSPEVQIAILTENINNLNGHLRTHKKDHHSRRGLLKMVGQRRNLLTYLREADVQRYRSVVDRLGLRR</sequence>
<name>RS15_BREBN</name>
<feature type="chain" id="PRO_1000166404" description="Small ribosomal subunit protein uS15">
    <location>
        <begin position="1"/>
        <end position="89"/>
    </location>
</feature>
<organism>
    <name type="scientific">Brevibacillus brevis (strain 47 / JCM 6285 / NBRC 100599)</name>
    <dbReference type="NCBI Taxonomy" id="358681"/>
    <lineage>
        <taxon>Bacteria</taxon>
        <taxon>Bacillati</taxon>
        <taxon>Bacillota</taxon>
        <taxon>Bacilli</taxon>
        <taxon>Bacillales</taxon>
        <taxon>Paenibacillaceae</taxon>
        <taxon>Brevibacillus</taxon>
    </lineage>
</organism>
<dbReference type="EMBL" id="AP008955">
    <property type="protein sequence ID" value="BAH44404.1"/>
    <property type="molecule type" value="Genomic_DNA"/>
</dbReference>
<dbReference type="RefSeq" id="WP_015891708.1">
    <property type="nucleotide sequence ID" value="NC_012491.1"/>
</dbReference>
<dbReference type="SMR" id="C0ZF45"/>
<dbReference type="STRING" id="358681.BBR47_34270"/>
<dbReference type="GeneID" id="95752352"/>
<dbReference type="KEGG" id="bbe:BBR47_34270"/>
<dbReference type="eggNOG" id="COG0184">
    <property type="taxonomic scope" value="Bacteria"/>
</dbReference>
<dbReference type="HOGENOM" id="CLU_148518_0_0_9"/>
<dbReference type="Proteomes" id="UP000001877">
    <property type="component" value="Chromosome"/>
</dbReference>
<dbReference type="GO" id="GO:0022627">
    <property type="term" value="C:cytosolic small ribosomal subunit"/>
    <property type="evidence" value="ECO:0007669"/>
    <property type="project" value="TreeGrafter"/>
</dbReference>
<dbReference type="GO" id="GO:0019843">
    <property type="term" value="F:rRNA binding"/>
    <property type="evidence" value="ECO:0007669"/>
    <property type="project" value="UniProtKB-UniRule"/>
</dbReference>
<dbReference type="GO" id="GO:0003735">
    <property type="term" value="F:structural constituent of ribosome"/>
    <property type="evidence" value="ECO:0007669"/>
    <property type="project" value="InterPro"/>
</dbReference>
<dbReference type="GO" id="GO:0006412">
    <property type="term" value="P:translation"/>
    <property type="evidence" value="ECO:0007669"/>
    <property type="project" value="UniProtKB-UniRule"/>
</dbReference>
<dbReference type="CDD" id="cd00353">
    <property type="entry name" value="Ribosomal_S15p_S13e"/>
    <property type="match status" value="1"/>
</dbReference>
<dbReference type="FunFam" id="1.10.287.10:FF:000002">
    <property type="entry name" value="30S ribosomal protein S15"/>
    <property type="match status" value="1"/>
</dbReference>
<dbReference type="Gene3D" id="6.10.250.3130">
    <property type="match status" value="1"/>
</dbReference>
<dbReference type="Gene3D" id="1.10.287.10">
    <property type="entry name" value="S15/NS1, RNA-binding"/>
    <property type="match status" value="1"/>
</dbReference>
<dbReference type="HAMAP" id="MF_01343_B">
    <property type="entry name" value="Ribosomal_uS15_B"/>
    <property type="match status" value="1"/>
</dbReference>
<dbReference type="InterPro" id="IPR000589">
    <property type="entry name" value="Ribosomal_uS15"/>
</dbReference>
<dbReference type="InterPro" id="IPR005290">
    <property type="entry name" value="Ribosomal_uS15_bac-type"/>
</dbReference>
<dbReference type="InterPro" id="IPR009068">
    <property type="entry name" value="uS15_NS1_RNA-bd_sf"/>
</dbReference>
<dbReference type="NCBIfam" id="TIGR00952">
    <property type="entry name" value="S15_bact"/>
    <property type="match status" value="1"/>
</dbReference>
<dbReference type="PANTHER" id="PTHR23321">
    <property type="entry name" value="RIBOSOMAL PROTEIN S15, BACTERIAL AND ORGANELLAR"/>
    <property type="match status" value="1"/>
</dbReference>
<dbReference type="PANTHER" id="PTHR23321:SF26">
    <property type="entry name" value="SMALL RIBOSOMAL SUBUNIT PROTEIN US15M"/>
    <property type="match status" value="1"/>
</dbReference>
<dbReference type="Pfam" id="PF00312">
    <property type="entry name" value="Ribosomal_S15"/>
    <property type="match status" value="1"/>
</dbReference>
<dbReference type="SMART" id="SM01387">
    <property type="entry name" value="Ribosomal_S15"/>
    <property type="match status" value="1"/>
</dbReference>
<dbReference type="SUPFAM" id="SSF47060">
    <property type="entry name" value="S15/NS1 RNA-binding domain"/>
    <property type="match status" value="1"/>
</dbReference>
<dbReference type="PROSITE" id="PS00362">
    <property type="entry name" value="RIBOSOMAL_S15"/>
    <property type="match status" value="1"/>
</dbReference>
<accession>C0ZF45</accession>